<dbReference type="EC" id="2.1.1.199" evidence="1"/>
<dbReference type="EMBL" id="CP000847">
    <property type="protein sequence ID" value="ABV75153.1"/>
    <property type="molecule type" value="Genomic_DNA"/>
</dbReference>
<dbReference type="RefSeq" id="WP_012149783.1">
    <property type="nucleotide sequence ID" value="NC_009881.1"/>
</dbReference>
<dbReference type="SMR" id="A8GP28"/>
<dbReference type="STRING" id="293614.A1C_04405"/>
<dbReference type="KEGG" id="rak:A1C_04405"/>
<dbReference type="eggNOG" id="COG0275">
    <property type="taxonomic scope" value="Bacteria"/>
</dbReference>
<dbReference type="HOGENOM" id="CLU_038422_1_1_5"/>
<dbReference type="Proteomes" id="UP000006830">
    <property type="component" value="Chromosome"/>
</dbReference>
<dbReference type="GO" id="GO:0005737">
    <property type="term" value="C:cytoplasm"/>
    <property type="evidence" value="ECO:0007669"/>
    <property type="project" value="UniProtKB-SubCell"/>
</dbReference>
<dbReference type="GO" id="GO:0071424">
    <property type="term" value="F:rRNA (cytosine-N4-)-methyltransferase activity"/>
    <property type="evidence" value="ECO:0007669"/>
    <property type="project" value="UniProtKB-UniRule"/>
</dbReference>
<dbReference type="GO" id="GO:0070475">
    <property type="term" value="P:rRNA base methylation"/>
    <property type="evidence" value="ECO:0007669"/>
    <property type="project" value="UniProtKB-UniRule"/>
</dbReference>
<dbReference type="CDD" id="cd02440">
    <property type="entry name" value="AdoMet_MTases"/>
    <property type="match status" value="1"/>
</dbReference>
<dbReference type="FunFam" id="1.10.150.170:FF:000003">
    <property type="entry name" value="Ribosomal RNA small subunit methyltransferase H"/>
    <property type="match status" value="1"/>
</dbReference>
<dbReference type="Gene3D" id="1.10.150.170">
    <property type="entry name" value="Putative methyltransferase TM0872, insert domain"/>
    <property type="match status" value="1"/>
</dbReference>
<dbReference type="Gene3D" id="3.40.50.150">
    <property type="entry name" value="Vaccinia Virus protein VP39"/>
    <property type="match status" value="1"/>
</dbReference>
<dbReference type="HAMAP" id="MF_01007">
    <property type="entry name" value="16SrRNA_methyltr_H"/>
    <property type="match status" value="1"/>
</dbReference>
<dbReference type="InterPro" id="IPR002903">
    <property type="entry name" value="RsmH"/>
</dbReference>
<dbReference type="InterPro" id="IPR023397">
    <property type="entry name" value="SAM-dep_MeTrfase_MraW_recog"/>
</dbReference>
<dbReference type="InterPro" id="IPR029063">
    <property type="entry name" value="SAM-dependent_MTases_sf"/>
</dbReference>
<dbReference type="NCBIfam" id="TIGR00006">
    <property type="entry name" value="16S rRNA (cytosine(1402)-N(4))-methyltransferase RsmH"/>
    <property type="match status" value="1"/>
</dbReference>
<dbReference type="PANTHER" id="PTHR11265:SF0">
    <property type="entry name" value="12S RRNA N4-METHYLCYTIDINE METHYLTRANSFERASE"/>
    <property type="match status" value="1"/>
</dbReference>
<dbReference type="PANTHER" id="PTHR11265">
    <property type="entry name" value="S-ADENOSYL-METHYLTRANSFERASE MRAW"/>
    <property type="match status" value="1"/>
</dbReference>
<dbReference type="Pfam" id="PF01795">
    <property type="entry name" value="Methyltransf_5"/>
    <property type="match status" value="1"/>
</dbReference>
<dbReference type="PIRSF" id="PIRSF004486">
    <property type="entry name" value="MraW"/>
    <property type="match status" value="1"/>
</dbReference>
<dbReference type="SUPFAM" id="SSF81799">
    <property type="entry name" value="Putative methyltransferase TM0872, insert domain"/>
    <property type="match status" value="1"/>
</dbReference>
<dbReference type="SUPFAM" id="SSF53335">
    <property type="entry name" value="S-adenosyl-L-methionine-dependent methyltransferases"/>
    <property type="match status" value="1"/>
</dbReference>
<feature type="chain" id="PRO_1000062832" description="Ribosomal RNA small subunit methyltransferase H">
    <location>
        <begin position="1"/>
        <end position="306"/>
    </location>
</feature>
<feature type="binding site" evidence="1">
    <location>
        <begin position="33"/>
        <end position="35"/>
    </location>
    <ligand>
        <name>S-adenosyl-L-methionine</name>
        <dbReference type="ChEBI" id="CHEBI:59789"/>
    </ligand>
</feature>
<feature type="binding site" evidence="1">
    <location>
        <position position="51"/>
    </location>
    <ligand>
        <name>S-adenosyl-L-methionine</name>
        <dbReference type="ChEBI" id="CHEBI:59789"/>
    </ligand>
</feature>
<feature type="binding site" evidence="1">
    <location>
        <position position="82"/>
    </location>
    <ligand>
        <name>S-adenosyl-L-methionine</name>
        <dbReference type="ChEBI" id="CHEBI:59789"/>
    </ligand>
</feature>
<feature type="binding site" evidence="1">
    <location>
        <position position="96"/>
    </location>
    <ligand>
        <name>S-adenosyl-L-methionine</name>
        <dbReference type="ChEBI" id="CHEBI:59789"/>
    </ligand>
</feature>
<feature type="binding site" evidence="1">
    <location>
        <position position="103"/>
    </location>
    <ligand>
        <name>S-adenosyl-L-methionine</name>
        <dbReference type="ChEBI" id="CHEBI:59789"/>
    </ligand>
</feature>
<reference key="1">
    <citation type="submission" date="2007-09" db="EMBL/GenBank/DDBJ databases">
        <title>Complete genome sequence of Rickettsia akari.</title>
        <authorList>
            <person name="Madan A."/>
            <person name="Fahey J."/>
            <person name="Helton E."/>
            <person name="Ketteman M."/>
            <person name="Madan A."/>
            <person name="Rodrigues S."/>
            <person name="Sanchez A."/>
            <person name="Whiting M."/>
            <person name="Dasch G."/>
            <person name="Eremeeva M."/>
        </authorList>
    </citation>
    <scope>NUCLEOTIDE SEQUENCE [LARGE SCALE GENOMIC DNA]</scope>
    <source>
        <strain>Hartford</strain>
    </source>
</reference>
<evidence type="ECO:0000255" key="1">
    <source>
        <dbReference type="HAMAP-Rule" id="MF_01007"/>
    </source>
</evidence>
<keyword id="KW-0963">Cytoplasm</keyword>
<keyword id="KW-0489">Methyltransferase</keyword>
<keyword id="KW-0698">rRNA processing</keyword>
<keyword id="KW-0949">S-adenosyl-L-methionine</keyword>
<keyword id="KW-0808">Transferase</keyword>
<name>RSMH_RICAH</name>
<gene>
    <name evidence="1" type="primary">rsmH</name>
    <name type="synonym">mraW</name>
    <name type="ordered locus">A1C_04405</name>
</gene>
<proteinExistence type="inferred from homology"/>
<protein>
    <recommendedName>
        <fullName evidence="1">Ribosomal RNA small subunit methyltransferase H</fullName>
        <ecNumber evidence="1">2.1.1.199</ecNumber>
    </recommendedName>
    <alternativeName>
        <fullName evidence="1">16S rRNA m(4)C1402 methyltransferase</fullName>
    </alternativeName>
    <alternativeName>
        <fullName evidence="1">rRNA (cytosine-N(4)-)-methyltransferase RsmH</fullName>
    </alternativeName>
</protein>
<comment type="function">
    <text evidence="1">Specifically methylates the N4 position of cytidine in position 1402 (C1402) of 16S rRNA.</text>
</comment>
<comment type="catalytic activity">
    <reaction evidence="1">
        <text>cytidine(1402) in 16S rRNA + S-adenosyl-L-methionine = N(4)-methylcytidine(1402) in 16S rRNA + S-adenosyl-L-homocysteine + H(+)</text>
        <dbReference type="Rhea" id="RHEA:42928"/>
        <dbReference type="Rhea" id="RHEA-COMP:10286"/>
        <dbReference type="Rhea" id="RHEA-COMP:10287"/>
        <dbReference type="ChEBI" id="CHEBI:15378"/>
        <dbReference type="ChEBI" id="CHEBI:57856"/>
        <dbReference type="ChEBI" id="CHEBI:59789"/>
        <dbReference type="ChEBI" id="CHEBI:74506"/>
        <dbReference type="ChEBI" id="CHEBI:82748"/>
        <dbReference type="EC" id="2.1.1.199"/>
    </reaction>
</comment>
<comment type="subcellular location">
    <subcellularLocation>
        <location evidence="1">Cytoplasm</location>
    </subcellularLocation>
</comment>
<comment type="similarity">
    <text evidence="1">Belongs to the methyltransferase superfamily. RsmH family.</text>
</comment>
<sequence length="306" mass="34800">MLQTHIPVMLSEVLKVLDPKGGEFYLDCTFGAGGYSKAILESCDCYVVALDRDPNVIKKAEEIKQNYVERFDFIATNFADSFAKLKEKQFDGIVLDLGVSSMQLDVADRGFSFLHDGPLDMRMSGQGFSAEEFVNTLEEKEIADIIYKYGNESFSRRIAKSIVEYRKTARIDSTGKLAEIVRSSIGFRKGKIDPATKTFQAIRIYINDELGELERFLMNVKNILKKDGRLVVVSFHSLEDMIIKNFFKENSEKPVARSKYAKDDIIIDPNKWLRIITNKALAPSDKEIRLNIRARSAKLRTAKKIL</sequence>
<organism>
    <name type="scientific">Rickettsia akari (strain Hartford)</name>
    <dbReference type="NCBI Taxonomy" id="293614"/>
    <lineage>
        <taxon>Bacteria</taxon>
        <taxon>Pseudomonadati</taxon>
        <taxon>Pseudomonadota</taxon>
        <taxon>Alphaproteobacteria</taxon>
        <taxon>Rickettsiales</taxon>
        <taxon>Rickettsiaceae</taxon>
        <taxon>Rickettsieae</taxon>
        <taxon>Rickettsia</taxon>
        <taxon>spotted fever group</taxon>
    </lineage>
</organism>
<accession>A8GP28</accession>